<evidence type="ECO:0000255" key="1">
    <source>
        <dbReference type="HAMAP-Rule" id="MF_04078"/>
    </source>
</evidence>
<accession>P17664</accession>
<name>NEF_SIVCZ</name>
<gene>
    <name evidence="1" type="primary">nef</name>
</gene>
<feature type="initiator methionine" description="Removed; by host" evidence="1">
    <location>
        <position position="1"/>
    </location>
</feature>
<feature type="chain" id="PRO_0000441002" description="Protein Nef" evidence="1">
    <location>
        <begin position="2"/>
        <end position="205"/>
    </location>
</feature>
<feature type="chain" id="PRO_0000441003" description="C-terminal core protein" evidence="1">
    <location>
        <begin position="58"/>
        <end position="205"/>
    </location>
</feature>
<feature type="region of interest" description="Acidic; interacts with host PACS1 and PACS2; stabilizes the interaction of NEF/MHC-I with host AP1M1; necessary for MHC-I internalization" evidence="1">
    <location>
        <begin position="62"/>
        <end position="65"/>
    </location>
</feature>
<feature type="region of interest" description="SH3-binding; interaction with Src family tyrosine kinases" evidence="1">
    <location>
        <begin position="69"/>
        <end position="78"/>
    </location>
</feature>
<feature type="region of interest" description="Mediates dimerization, Nef-PTE1 interaction" evidence="1">
    <location>
        <begin position="108"/>
        <end position="124"/>
    </location>
</feature>
<feature type="region of interest" description="Binding to ATP6V1H" evidence="1">
    <location>
        <begin position="148"/>
        <end position="180"/>
    </location>
</feature>
<feature type="short sequence motif" description="PxxP; stabilizes the interaction of NEF/MHC-I with host AP1M1; necessary for MHC-I internalization" evidence="1">
    <location>
        <begin position="72"/>
        <end position="75"/>
    </location>
</feature>
<feature type="short sequence motif" description="Dileucine internalization motif; necessary for CD4 internalization" evidence="1">
    <location>
        <begin position="164"/>
        <end position="165"/>
    </location>
</feature>
<feature type="short sequence motif" description="Diacidic; necessary for CD4 internalization" evidence="1">
    <location>
        <begin position="174"/>
        <end position="175"/>
    </location>
</feature>
<feature type="site" description="Cleavage; by viral protease" evidence="1">
    <location>
        <begin position="57"/>
        <end position="58"/>
    </location>
</feature>
<feature type="modified residue" description="Phosphoserine; by host" evidence="1">
    <location>
        <position position="6"/>
    </location>
</feature>
<feature type="lipid moiety-binding region" description="N-myristoyl glycine; by host" evidence="1">
    <location>
        <position position="2"/>
    </location>
</feature>
<protein>
    <recommendedName>
        <fullName evidence="1">Protein Nef</fullName>
    </recommendedName>
    <alternativeName>
        <fullName evidence="1">3'ORF</fullName>
    </alternativeName>
    <alternativeName>
        <fullName evidence="1">Negative factor</fullName>
        <shortName evidence="1">F-protein</shortName>
    </alternativeName>
    <component>
        <recommendedName>
            <fullName evidence="1">C-terminal core protein</fullName>
        </recommendedName>
    </component>
</protein>
<keyword id="KW-0014">AIDS</keyword>
<keyword id="KW-0053">Apoptosis</keyword>
<keyword id="KW-0244">Early protein</keyword>
<keyword id="KW-1032">Host cell membrane</keyword>
<keyword id="KW-1040">Host Golgi apparatus</keyword>
<keyword id="KW-1043">Host membrane</keyword>
<keyword id="KW-0945">Host-virus interaction</keyword>
<keyword id="KW-1080">Inhibition of host adaptive immune response by virus</keyword>
<keyword id="KW-1083">Inhibition of host autophagy by virus</keyword>
<keyword id="KW-1115">Inhibition of host MHC class I molecule presentation by virus</keyword>
<keyword id="KW-1116">Inhibition of host MHC class II molecule presentation by virus</keyword>
<keyword id="KW-0449">Lipoprotein</keyword>
<keyword id="KW-0472">Membrane</keyword>
<keyword id="KW-0519">Myristate</keyword>
<keyword id="KW-0597">Phosphoprotein</keyword>
<keyword id="KW-1185">Reference proteome</keyword>
<keyword id="KW-0964">Secreted</keyword>
<keyword id="KW-0729">SH3-binding</keyword>
<keyword id="KW-0899">Viral immunoevasion</keyword>
<keyword id="KW-0946">Virion</keyword>
<keyword id="KW-0843">Virulence</keyword>
<sequence length="205" mass="23850">MGTKWSKSSLVGWPEVRRRIREAPTAAEGVGEVSKDLERHGAITSRNTPETNQTLAWLEEMDNEEVGFPVRPQVPTRPMTYKAAFDLSHFLKEKGGLEGLVYSRRRQEILDLWVYHTQGFFPDWQNYTTGPGTRFPLCFGWCFKLVPLTEEQVEQANEGDNNCLLHPICQHGMEDEDKEVLVWRFDSRLALRHIAREQHPEYYKD</sequence>
<organism>
    <name type="scientific">Simian immunodeficiency virus (isolate CPZ GAB1)</name>
    <name type="common">SIV-cpz</name>
    <name type="synonym">Chimpanzee immunodeficiency virus</name>
    <dbReference type="NCBI Taxonomy" id="402771"/>
    <lineage>
        <taxon>Viruses</taxon>
        <taxon>Riboviria</taxon>
        <taxon>Pararnavirae</taxon>
        <taxon>Artverviricota</taxon>
        <taxon>Revtraviricetes</taxon>
        <taxon>Ortervirales</taxon>
        <taxon>Retroviridae</taxon>
        <taxon>Orthoretrovirinae</taxon>
        <taxon>Lentivirus</taxon>
        <taxon>Simian immunodeficiency virus</taxon>
    </lineage>
</organism>
<proteinExistence type="inferred from homology"/>
<comment type="function">
    <text evidence="1">Factor of infectivity and pathogenicity, required for optimal virus replication. Alters numerous pathways of T-lymphocyte function and down-regulates immunity surface molecules in order to evade host defense and increase viral infectivity. Alters the functionality of other immunity cells, like dendritic cells, monocytes/macrophages and NK cells.</text>
</comment>
<comment type="function">
    <text evidence="1">In infected CD4(+) T-lymphocytes, down-regulates the surface MHC-I, mature MHC-II, CD4, CD28, CCR5 and CXCR4 molecules. Mediates internalization and degradation of host CD4 through the interaction of with the cytoplasmic tail of CD4, the recruitment of AP-2 (clathrin adapter protein complex 2), internalization through clathrin coated pits, and subsequent transport to endosomes and lysosomes for degradation. Diverts host MHC-I molecules to the trans-Golgi network-associated endosomal compartments by an endocytic pathway to finally target them for degradation. MHC-I down-regulation may involve AP-1 (clathrin adapter protein complex 1) or possibly Src family kinase-ZAP70/Syk-PI3K cascade recruited by PACS2. In consequence infected cells are masked for immune recognition by cytotoxic T-lymphocytes. Decreasing the number of immune receptors also prevents reinfection by more HIV particles (superinfection). Down-regulates host SERINC3 and SERINC5 thereby excluding these proteins from the viral particles. Virion infectivity is drastically higher when SERINC3 or SERINC5 are excluded from the viral envelope, because these host antiviral proteins impair the membrane fusion event necessary for subsequent virion penetration.</text>
</comment>
<comment type="function">
    <text evidence="1">Bypasses host T-cell signaling by inducing a transcriptional program nearly identical to that of anti-CD3 cell activation. Interaction with TCR-zeta chain up-regulates the Fas ligand (FasL). Increasing surface FasL molecules and decreasing surface MHC-I molecules on infected CD4(+) cells send attacking cytotoxic CD8+ T-lymphocytes into apoptosis.</text>
</comment>
<comment type="function">
    <text evidence="1">Plays a role in optimizing the host cell environment for viral replication without causing cell death by apoptosis. Protects the infected cells from apoptosis in order to keep them alive until the next virus generation is ready to strike. Inhibits the Fas and TNFR-mediated death signals by blocking MAP3K5/ASK1. Decreases the half-life of TP53, protecting the infected cell against p53-mediated apoptosis. Inhibits the apoptotic signals regulated by the Bcl-2 family proteins through the formation of a Nef/PI3-kinase/PAK2 complex that leads to activation of PAK2 and induces phosphorylation of host BAD.</text>
</comment>
<comment type="function">
    <text evidence="1">Extracellular Nef protein targets CD4(+) T-lymphocytes for apoptosis by interacting with CXCR4 surface receptors.</text>
</comment>
<comment type="subunit">
    <text evidence="1">Monomer; cytosolic form. Homodimer; membrane bound form. Interacts with Nef associated p21-activated kinase (PAK2); this interaction activates PAK2. Associates with the Nef-MHC-I-AP1 complex; this complex is required for MHC-I internalization. Interacts (via C-terminus) with host PI3-kinase. Interacts with host PACS1; this interaction seems to be weak. Interacts with host PACS2. Interacts with host LCK and MAPK3; these interactions inhibit the kinase activity of the latter. Interacts with host ATP6V1H; this interaction may play a role in CD4 endocytosis. Associates with the CD4-Nef-AP2 complex; this complex is required for CD4 internalization. Interacts with host AP2 subunit alpha and AP2 subunit sigma2. Interacts with TCR-zeta chain; this interaction up-regulates the Fas ligand (FasL) surface expression. Interacts with host HCK, LYN, and SRC; these interactions activate the Src family kinases. Interacts with MAP3K5; this interaction inhibits the Fas and TNFR-mediated death signals. Interacts with beta-COP and PTE1. Interacts with human RACK1; this increases Nef phosphorylation by PKC. Interacts with TP53; this interaction decreases the half-life of TP53, protecting the infected cell against p53-mediated apoptosis.</text>
</comment>
<comment type="subcellular location">
    <subcellularLocation>
        <location evidence="1">Host cell membrane</location>
        <topology evidence="1">Lipid-anchor</topology>
        <orientation evidence="1">Cytoplasmic side</orientation>
    </subcellularLocation>
    <subcellularLocation>
        <location evidence="1">Virion</location>
    </subcellularLocation>
    <subcellularLocation>
        <location evidence="1">Secreted</location>
    </subcellularLocation>
    <subcellularLocation>
        <location evidence="1">Host Golgi apparatus membrane</location>
    </subcellularLocation>
    <text evidence="1">TGN localization requires PACS1. Associates with the inner plasma membrane through its N-terminal domain. Nef stimulates its own export via the release of exosomes. Incorporated in virions at a rate of about 10 molecules per virion, where it is cleaved.</text>
</comment>
<comment type="induction">
    <text evidence="1">Expressed early in the viral replication cycle.</text>
</comment>
<comment type="domain">
    <text evidence="1">The N-terminal domain is composed of the N-myristoyl glycine and of a cluster of positively charged amino acids. It is required for inner plasma membrane targeting of Nef and virion incorporation, and thereby for infectivity. This domain is also involved in binding to TP53.</text>
</comment>
<comment type="domain">
    <text evidence="1">The SH3-binding domain constituted of PxxP motifs mediates binding to several Src family proteins thereby regulating their tyrosine kinase activity. The same motifs also mediates the association with MAPK3, PI3-kinase and TCR-zeta.</text>
</comment>
<comment type="domain">
    <text evidence="1">The dileucine internalization motif and a diacidic motif seem to be required for binding to AP-2.</text>
</comment>
<comment type="domain">
    <text evidence="1">The acidic region binds to the sorting protein PACS-2, which targets Nef to the paranuclear region, enabling the PxxP motif to direct assembly of an SFK/ZAP-70/PI3K complex that accelerates endocytosis of cell-surface MHC-I.</text>
</comment>
<comment type="PTM">
    <text evidence="1">The virion-associated Nef proteins are cleaved by the viral protease to release the soluble C-terminal core protein. Nef is probably cleaved concomitantly with viral structural proteins on maturation of virus particles.</text>
</comment>
<comment type="PTM">
    <text evidence="1">Myristoylated.</text>
</comment>
<comment type="PTM">
    <text evidence="1">Phosphorylated on serine residues, probably by host PKCdelta and theta.</text>
</comment>
<comment type="miscellaneous">
    <text evidence="1">HIV-1 lineages are divided in three main groups, M (for Major), O (for Outlier), and N (for New, or Non-M, Non-O). The vast majority of strains found worldwide belong to the group M. Group O seems to be endemic to and largely confined to Cameroon and neighboring countries in West Central Africa, where these viruses represent a small minority of HIV-1 strains. The group N is represented by a limited number of isolates from Cameroonian persons. The group M is further subdivided in 9 clades or subtypes (A to D, F to H, J and K).</text>
</comment>
<comment type="similarity">
    <text evidence="1">Belongs to the lentivirus primate group Nef protein family.</text>
</comment>
<organismHost>
    <name type="scientific">Pan</name>
    <name type="common">chimpanzees</name>
    <dbReference type="NCBI Taxonomy" id="9596"/>
</organismHost>
<dbReference type="EMBL" id="X52154">
    <property type="protein sequence ID" value="CAA36408.1"/>
    <property type="molecule type" value="Genomic_RNA"/>
</dbReference>
<dbReference type="PIR" id="S09991">
    <property type="entry name" value="ASLJIK"/>
</dbReference>
<dbReference type="SMR" id="P17664"/>
<dbReference type="Proteomes" id="UP000009153">
    <property type="component" value="Segment"/>
</dbReference>
<dbReference type="GO" id="GO:0005576">
    <property type="term" value="C:extracellular region"/>
    <property type="evidence" value="ECO:0007669"/>
    <property type="project" value="UniProtKB-SubCell"/>
</dbReference>
<dbReference type="GO" id="GO:0044178">
    <property type="term" value="C:host cell Golgi membrane"/>
    <property type="evidence" value="ECO:0007669"/>
    <property type="project" value="UniProtKB-SubCell"/>
</dbReference>
<dbReference type="GO" id="GO:0020002">
    <property type="term" value="C:host cell plasma membrane"/>
    <property type="evidence" value="ECO:0007669"/>
    <property type="project" value="UniProtKB-SubCell"/>
</dbReference>
<dbReference type="GO" id="GO:0016020">
    <property type="term" value="C:membrane"/>
    <property type="evidence" value="ECO:0007669"/>
    <property type="project" value="UniProtKB-UniRule"/>
</dbReference>
<dbReference type="GO" id="GO:0044423">
    <property type="term" value="C:virion component"/>
    <property type="evidence" value="ECO:0007669"/>
    <property type="project" value="UniProtKB-UniRule"/>
</dbReference>
<dbReference type="GO" id="GO:0005525">
    <property type="term" value="F:GTP binding"/>
    <property type="evidence" value="ECO:0007669"/>
    <property type="project" value="UniProtKB-UniRule"/>
</dbReference>
<dbReference type="GO" id="GO:0017124">
    <property type="term" value="F:SH3 domain binding"/>
    <property type="evidence" value="ECO:0007669"/>
    <property type="project" value="UniProtKB-UniRule"/>
</dbReference>
<dbReference type="GO" id="GO:0046776">
    <property type="term" value="P:symbiont-mediated suppression of host antigen processing and presentation of peptide antigen via MHC class I"/>
    <property type="evidence" value="ECO:0007669"/>
    <property type="project" value="UniProtKB-UniRule"/>
</dbReference>
<dbReference type="GO" id="GO:0039505">
    <property type="term" value="P:symbiont-mediated suppression of host antigen processing and presentation of peptide antigen via MHC class II"/>
    <property type="evidence" value="ECO:0007669"/>
    <property type="project" value="UniProtKB-UniRule"/>
</dbReference>
<dbReference type="GO" id="GO:0140321">
    <property type="term" value="P:symbiont-mediated suppression of host autophagy"/>
    <property type="evidence" value="ECO:0007669"/>
    <property type="project" value="UniProtKB-KW"/>
</dbReference>
<dbReference type="Gene3D" id="4.10.890.10">
    <property type="entry name" value="HIV 1 nef anchor domain"/>
    <property type="match status" value="1"/>
</dbReference>
<dbReference type="Gene3D" id="3.30.62.10">
    <property type="entry name" value="Nef Regulatory Factor"/>
    <property type="match status" value="1"/>
</dbReference>
<dbReference type="HAMAP" id="MF_04078">
    <property type="entry name" value="NEF_HIV"/>
    <property type="match status" value="1"/>
</dbReference>
<dbReference type="InterPro" id="IPR027480">
    <property type="entry name" value="HIV-1_Nef_anchor_sf"/>
</dbReference>
<dbReference type="InterPro" id="IPR027481">
    <property type="entry name" value="HIV-1_Nef_core_sf"/>
</dbReference>
<dbReference type="InterPro" id="IPR001558">
    <property type="entry name" value="HIV_Nef"/>
</dbReference>
<dbReference type="Pfam" id="PF00469">
    <property type="entry name" value="F-protein"/>
    <property type="match status" value="1"/>
</dbReference>
<dbReference type="SUPFAM" id="SSF55671">
    <property type="entry name" value="Regulatory factor Nef"/>
    <property type="match status" value="1"/>
</dbReference>
<reference key="1">
    <citation type="journal article" date="1990" name="Nature">
        <title>Genetic organization of a chimpanzee lentivirus related to HIV-1.</title>
        <authorList>
            <person name="Huet T."/>
            <person name="Cheynier R."/>
            <person name="Meyerhans A."/>
            <person name="Roelants G."/>
            <person name="Wain-Hobson S."/>
        </authorList>
    </citation>
    <scope>NUCLEOTIDE SEQUENCE [GENOMIC RNA]</scope>
</reference>